<organism>
    <name type="scientific">Caenorhabditis elegans</name>
    <dbReference type="NCBI Taxonomy" id="6239"/>
    <lineage>
        <taxon>Eukaryota</taxon>
        <taxon>Metazoa</taxon>
        <taxon>Ecdysozoa</taxon>
        <taxon>Nematoda</taxon>
        <taxon>Chromadorea</taxon>
        <taxon>Rhabditida</taxon>
        <taxon>Rhabditina</taxon>
        <taxon>Rhabditomorpha</taxon>
        <taxon>Rhabditoidea</taxon>
        <taxon>Rhabditidae</taxon>
        <taxon>Peloderinae</taxon>
        <taxon>Caenorhabditis</taxon>
    </lineage>
</organism>
<accession>P41998</accession>
<feature type="chain" id="PRO_0000065055" description="Uncharacterized protein B0280.7">
    <location>
        <begin position="1"/>
        <end position="344"/>
    </location>
</feature>
<protein>
    <recommendedName>
        <fullName>Uncharacterized protein B0280.7</fullName>
    </recommendedName>
</protein>
<dbReference type="EMBL" id="FO080148">
    <property type="protein sequence ID" value="CCD61603.1"/>
    <property type="molecule type" value="Genomic_DNA"/>
</dbReference>
<dbReference type="PIR" id="T15301">
    <property type="entry name" value="T15301"/>
</dbReference>
<dbReference type="RefSeq" id="NP_498553.1">
    <property type="nucleotide sequence ID" value="NM_066152.6"/>
</dbReference>
<dbReference type="FunCoup" id="P41998">
    <property type="interactions" value="423"/>
</dbReference>
<dbReference type="STRING" id="6239.B0280.7.1"/>
<dbReference type="PaxDb" id="6239-B0280.7"/>
<dbReference type="PeptideAtlas" id="P41998"/>
<dbReference type="EnsemblMetazoa" id="B0280.7.1">
    <property type="protein sequence ID" value="B0280.7.1"/>
    <property type="gene ID" value="WBGene00015103"/>
</dbReference>
<dbReference type="GeneID" id="175992"/>
<dbReference type="KEGG" id="cel:CELE_B0280.7"/>
<dbReference type="UCSC" id="B0280.7">
    <property type="organism name" value="c. elegans"/>
</dbReference>
<dbReference type="AGR" id="WB:WBGene00015103"/>
<dbReference type="CTD" id="175992"/>
<dbReference type="WormBase" id="B0280.7">
    <property type="protein sequence ID" value="CE29535"/>
    <property type="gene ID" value="WBGene00015103"/>
</dbReference>
<dbReference type="eggNOG" id="ENOG502RA0N">
    <property type="taxonomic scope" value="Eukaryota"/>
</dbReference>
<dbReference type="HOGENOM" id="CLU_069457_0_0_1"/>
<dbReference type="InParanoid" id="P41998"/>
<dbReference type="OMA" id="CIFLCHP"/>
<dbReference type="OrthoDB" id="5780467at2759"/>
<dbReference type="PRO" id="PR:P41998"/>
<dbReference type="Proteomes" id="UP000001940">
    <property type="component" value="Chromosome III"/>
</dbReference>
<dbReference type="Bgee" id="WBGene00015103">
    <property type="expression patterns" value="Expressed in pharyngeal muscle cell (C elegans) and 3 other cell types or tissues"/>
</dbReference>
<dbReference type="InterPro" id="IPR055119">
    <property type="entry name" value="Mig18_Fn1"/>
</dbReference>
<dbReference type="Pfam" id="PF23003">
    <property type="entry name" value="Fn1_2"/>
    <property type="match status" value="1"/>
</dbReference>
<reference key="1">
    <citation type="journal article" date="1998" name="Science">
        <title>Genome sequence of the nematode C. elegans: a platform for investigating biology.</title>
        <authorList>
            <consortium name="The C. elegans sequencing consortium"/>
        </authorList>
    </citation>
    <scope>NUCLEOTIDE SEQUENCE [LARGE SCALE GENOMIC DNA]</scope>
    <source>
        <strain>Bristol N2</strain>
    </source>
</reference>
<name>YKC7_CAEEL</name>
<proteinExistence type="predicted"/>
<keyword id="KW-1185">Reference proteome</keyword>
<sequence length="344" mass="38575">MKNLGAAILAVICLQYADSAAVFDRNFTKPYVLKKTWVQNFIKFQYIFEGNQGKAKIVPLGCAPTNVDGDNYLKPGERTFQHDFVFSCEEGEDGVLNYEAIACIDTQGEIMHPGETRSLSNGTVILHCNLYGGALKKVVERAAGCYFNETIYPEEEKWVEPQVNPNDTSIDGRLMQCFRPHYSYYESHVVGCVIGKLGVLIDEFGQLLDGSYVKCVESEFGHVSLKSANVDELACTMDNKTYAHASQWTDVKKGANMRCNYRHIVKESCVLGTEILPIGQEVPVSRDCIFLCHPQTNVYICDNSLEEFKIVESNGDDLGPVEENKIVEKLPENKKKSLKSVFKF</sequence>
<gene>
    <name type="ORF">B0280.7</name>
</gene>